<name>RS21_OLEA2</name>
<dbReference type="EMBL" id="CP000112">
    <property type="protein sequence ID" value="ABB38853.1"/>
    <property type="molecule type" value="Genomic_DNA"/>
</dbReference>
<dbReference type="RefSeq" id="WP_011367958.1">
    <property type="nucleotide sequence ID" value="NC_007519.1"/>
</dbReference>
<dbReference type="SMR" id="Q30ZP3"/>
<dbReference type="STRING" id="207559.Dde_2056"/>
<dbReference type="KEGG" id="dde:Dde_2056"/>
<dbReference type="eggNOG" id="COG0828">
    <property type="taxonomic scope" value="Bacteria"/>
</dbReference>
<dbReference type="HOGENOM" id="CLU_159258_1_2_7"/>
<dbReference type="Proteomes" id="UP000002710">
    <property type="component" value="Chromosome"/>
</dbReference>
<dbReference type="GO" id="GO:1990904">
    <property type="term" value="C:ribonucleoprotein complex"/>
    <property type="evidence" value="ECO:0007669"/>
    <property type="project" value="UniProtKB-KW"/>
</dbReference>
<dbReference type="GO" id="GO:0005840">
    <property type="term" value="C:ribosome"/>
    <property type="evidence" value="ECO:0007669"/>
    <property type="project" value="UniProtKB-KW"/>
</dbReference>
<dbReference type="GO" id="GO:0003735">
    <property type="term" value="F:structural constituent of ribosome"/>
    <property type="evidence" value="ECO:0007669"/>
    <property type="project" value="InterPro"/>
</dbReference>
<dbReference type="GO" id="GO:0006412">
    <property type="term" value="P:translation"/>
    <property type="evidence" value="ECO:0007669"/>
    <property type="project" value="UniProtKB-UniRule"/>
</dbReference>
<dbReference type="Gene3D" id="1.20.5.1150">
    <property type="entry name" value="Ribosomal protein S8"/>
    <property type="match status" value="1"/>
</dbReference>
<dbReference type="HAMAP" id="MF_00358">
    <property type="entry name" value="Ribosomal_bS21"/>
    <property type="match status" value="1"/>
</dbReference>
<dbReference type="InterPro" id="IPR001911">
    <property type="entry name" value="Ribosomal_bS21"/>
</dbReference>
<dbReference type="InterPro" id="IPR018278">
    <property type="entry name" value="Ribosomal_bS21_CS"/>
</dbReference>
<dbReference type="InterPro" id="IPR038380">
    <property type="entry name" value="Ribosomal_bS21_sf"/>
</dbReference>
<dbReference type="NCBIfam" id="TIGR00030">
    <property type="entry name" value="S21p"/>
    <property type="match status" value="1"/>
</dbReference>
<dbReference type="PANTHER" id="PTHR21109">
    <property type="entry name" value="MITOCHONDRIAL 28S RIBOSOMAL PROTEIN S21"/>
    <property type="match status" value="1"/>
</dbReference>
<dbReference type="PANTHER" id="PTHR21109:SF22">
    <property type="entry name" value="SMALL RIBOSOMAL SUBUNIT PROTEIN BS21"/>
    <property type="match status" value="1"/>
</dbReference>
<dbReference type="Pfam" id="PF01165">
    <property type="entry name" value="Ribosomal_S21"/>
    <property type="match status" value="1"/>
</dbReference>
<dbReference type="PRINTS" id="PR00976">
    <property type="entry name" value="RIBOSOMALS21"/>
</dbReference>
<dbReference type="PROSITE" id="PS01181">
    <property type="entry name" value="RIBOSOMAL_S21"/>
    <property type="match status" value="1"/>
</dbReference>
<organism>
    <name type="scientific">Oleidesulfovibrio alaskensis (strain ATCC BAA-1058 / DSM 17464 / G20)</name>
    <name type="common">Desulfovibrio alaskensis</name>
    <dbReference type="NCBI Taxonomy" id="207559"/>
    <lineage>
        <taxon>Bacteria</taxon>
        <taxon>Pseudomonadati</taxon>
        <taxon>Thermodesulfobacteriota</taxon>
        <taxon>Desulfovibrionia</taxon>
        <taxon>Desulfovibrionales</taxon>
        <taxon>Desulfovibrionaceae</taxon>
        <taxon>Oleidesulfovibrio</taxon>
    </lineage>
</organism>
<proteinExistence type="inferred from homology"/>
<protein>
    <recommendedName>
        <fullName evidence="1">Small ribosomal subunit protein bS21</fullName>
    </recommendedName>
    <alternativeName>
        <fullName evidence="2">30S ribosomal protein S21</fullName>
    </alternativeName>
</protein>
<feature type="chain" id="PRO_0000266665" description="Small ribosomal subunit protein bS21">
    <location>
        <begin position="1"/>
        <end position="67"/>
    </location>
</feature>
<comment type="similarity">
    <text evidence="1">Belongs to the bacterial ribosomal protein bS21 family.</text>
</comment>
<accession>Q30ZP3</accession>
<keyword id="KW-1185">Reference proteome</keyword>
<keyword id="KW-0687">Ribonucleoprotein</keyword>
<keyword id="KW-0689">Ribosomal protein</keyword>
<evidence type="ECO:0000255" key="1">
    <source>
        <dbReference type="HAMAP-Rule" id="MF_00358"/>
    </source>
</evidence>
<evidence type="ECO:0000305" key="2"/>
<gene>
    <name evidence="1" type="primary">rpsU</name>
    <name type="ordered locus">Dde_2056</name>
</gene>
<sequence>MPGVYLDDNEYNFDIALRRFKKQVEKAGVLSEMKKRQHFEKPSVMRKKKKAAARKRLLKKMRKANMG</sequence>
<reference key="1">
    <citation type="journal article" date="2011" name="J. Bacteriol.">
        <title>Complete genome sequence and updated annotation of Desulfovibrio alaskensis G20.</title>
        <authorList>
            <person name="Hauser L.J."/>
            <person name="Land M.L."/>
            <person name="Brown S.D."/>
            <person name="Larimer F."/>
            <person name="Keller K.L."/>
            <person name="Rapp-Giles B.J."/>
            <person name="Price M.N."/>
            <person name="Lin M."/>
            <person name="Bruce D.C."/>
            <person name="Detter J.C."/>
            <person name="Tapia R."/>
            <person name="Han C.S."/>
            <person name="Goodwin L.A."/>
            <person name="Cheng J.F."/>
            <person name="Pitluck S."/>
            <person name="Copeland A."/>
            <person name="Lucas S."/>
            <person name="Nolan M."/>
            <person name="Lapidus A.L."/>
            <person name="Palumbo A.V."/>
            <person name="Wall J.D."/>
        </authorList>
    </citation>
    <scope>NUCLEOTIDE SEQUENCE [LARGE SCALE GENOMIC DNA]</scope>
    <source>
        <strain>ATCC BAA-1058 / DSM 17464 / G20</strain>
    </source>
</reference>